<organism>
    <name type="scientific">Staphylococcus epidermidis (strain ATCC 35984 / DSM 28319 / BCRC 17069 / CCUG 31568 / BM 3577 / RP62A)</name>
    <dbReference type="NCBI Taxonomy" id="176279"/>
    <lineage>
        <taxon>Bacteria</taxon>
        <taxon>Bacillati</taxon>
        <taxon>Bacillota</taxon>
        <taxon>Bacilli</taxon>
        <taxon>Bacillales</taxon>
        <taxon>Staphylococcaceae</taxon>
        <taxon>Staphylococcus</taxon>
    </lineage>
</organism>
<name>TPX_STAEQ</name>
<reference key="1">
    <citation type="journal article" date="2005" name="J. Bacteriol.">
        <title>Insights on evolution of virulence and resistance from the complete genome analysis of an early methicillin-resistant Staphylococcus aureus strain and a biofilm-producing methicillin-resistant Staphylococcus epidermidis strain.</title>
        <authorList>
            <person name="Gill S.R."/>
            <person name="Fouts D.E."/>
            <person name="Archer G.L."/>
            <person name="Mongodin E.F."/>
            <person name="DeBoy R.T."/>
            <person name="Ravel J."/>
            <person name="Paulsen I.T."/>
            <person name="Kolonay J.F."/>
            <person name="Brinkac L.M."/>
            <person name="Beanan M.J."/>
            <person name="Dodson R.J."/>
            <person name="Daugherty S.C."/>
            <person name="Madupu R."/>
            <person name="Angiuoli S.V."/>
            <person name="Durkin A.S."/>
            <person name="Haft D.H."/>
            <person name="Vamathevan J.J."/>
            <person name="Khouri H."/>
            <person name="Utterback T.R."/>
            <person name="Lee C."/>
            <person name="Dimitrov G."/>
            <person name="Jiang L."/>
            <person name="Qin H."/>
            <person name="Weidman J."/>
            <person name="Tran K."/>
            <person name="Kang K.H."/>
            <person name="Hance I.R."/>
            <person name="Nelson K.E."/>
            <person name="Fraser C.M."/>
        </authorList>
    </citation>
    <scope>NUCLEOTIDE SEQUENCE [LARGE SCALE GENOMIC DNA]</scope>
    <source>
        <strain>ATCC 35984 / DSM 28319 / BCRC 17069 / CCUG 31568 / BM 3577 / RP62A</strain>
    </source>
</reference>
<evidence type="ECO:0000255" key="1">
    <source>
        <dbReference type="HAMAP-Rule" id="MF_00269"/>
    </source>
</evidence>
<feature type="chain" id="PRO_0000187905" description="Thiol peroxidase">
    <location>
        <begin position="1"/>
        <end position="164"/>
    </location>
</feature>
<feature type="domain" description="Thioredoxin" evidence="1">
    <location>
        <begin position="18"/>
        <end position="163"/>
    </location>
</feature>
<feature type="active site" description="Cysteine sulfenic acid (-SOH) intermediate" evidence="1">
    <location>
        <position position="60"/>
    </location>
</feature>
<feature type="disulfide bond" description="Redox-active" evidence="1">
    <location>
        <begin position="60"/>
        <end position="93"/>
    </location>
</feature>
<protein>
    <recommendedName>
        <fullName evidence="1">Thiol peroxidase</fullName>
        <shortName evidence="1">Tpx</shortName>
        <ecNumber evidence="1">1.11.1.24</ecNumber>
    </recommendedName>
    <alternativeName>
        <fullName evidence="1">Peroxiredoxin tpx</fullName>
        <shortName evidence="1">Prx</shortName>
    </alternativeName>
    <alternativeName>
        <fullName evidence="1">Thioredoxin peroxidase</fullName>
    </alternativeName>
    <alternativeName>
        <fullName evidence="1">Thioredoxin-dependent peroxiredoxin</fullName>
    </alternativeName>
</protein>
<proteinExistence type="inferred from homology"/>
<gene>
    <name evidence="1" type="primary">tpx</name>
    <name type="ordered locus">SERP1277</name>
</gene>
<comment type="function">
    <text evidence="1">Thiol-specific peroxidase that catalyzes the reduction of hydrogen peroxide and organic hydroperoxides to water and alcohols, respectively. Plays a role in cell protection against oxidative stress by detoxifying peroxides.</text>
</comment>
<comment type="catalytic activity">
    <reaction evidence="1">
        <text>a hydroperoxide + [thioredoxin]-dithiol = an alcohol + [thioredoxin]-disulfide + H2O</text>
        <dbReference type="Rhea" id="RHEA:62620"/>
        <dbReference type="Rhea" id="RHEA-COMP:10698"/>
        <dbReference type="Rhea" id="RHEA-COMP:10700"/>
        <dbReference type="ChEBI" id="CHEBI:15377"/>
        <dbReference type="ChEBI" id="CHEBI:29950"/>
        <dbReference type="ChEBI" id="CHEBI:30879"/>
        <dbReference type="ChEBI" id="CHEBI:35924"/>
        <dbReference type="ChEBI" id="CHEBI:50058"/>
        <dbReference type="EC" id="1.11.1.24"/>
    </reaction>
</comment>
<comment type="subunit">
    <text evidence="1">Homodimer.</text>
</comment>
<comment type="miscellaneous">
    <text evidence="1">The active site is a conserved redox-active cysteine residue, the peroxidatic cysteine (C(P)), which makes the nucleophilic attack on the peroxide substrate. The peroxide oxidizes the C(P)-SH to cysteine sulfenic acid (C(P)-SOH), which then reacts with another cysteine residue, the resolving cysteine (C(R)), to form a disulfide bridge. The disulfide is subsequently reduced by an appropriate electron donor to complete the catalytic cycle. In this atypical 2-Cys peroxiredoxin, C(R) is present in the same subunit to form an intramolecular disulfide. The disulfide is subsequently reduced by thioredoxin.</text>
</comment>
<comment type="similarity">
    <text evidence="1">Belongs to the peroxiredoxin family. Tpx subfamily.</text>
</comment>
<accession>Q5HNJ2</accession>
<sequence length="164" mass="18297">MTQITFKNNPIKLSGSEVNEGDIAPNFTVLDNSLNQITLDDYKNKKKLISVIPSIDTGVCDSQTRKFNEEASAEDGVVLTISVDLPFAQKRWCASSGLDNVITLSDHKDLSFGRNYGLVMDELRLLARSVFVLNENNKVVYKEIVSEGTNYPDFEAALKAYRNI</sequence>
<dbReference type="EC" id="1.11.1.24" evidence="1"/>
<dbReference type="EMBL" id="CP000029">
    <property type="protein sequence ID" value="AAW54671.1"/>
    <property type="molecule type" value="Genomic_DNA"/>
</dbReference>
<dbReference type="RefSeq" id="WP_001832701.1">
    <property type="nucleotide sequence ID" value="NC_002976.3"/>
</dbReference>
<dbReference type="SMR" id="Q5HNJ2"/>
<dbReference type="STRING" id="176279.SERP1277"/>
<dbReference type="GeneID" id="50018498"/>
<dbReference type="KEGG" id="ser:SERP1277"/>
<dbReference type="eggNOG" id="COG2077">
    <property type="taxonomic scope" value="Bacteria"/>
</dbReference>
<dbReference type="HOGENOM" id="CLU_042529_12_0_9"/>
<dbReference type="Proteomes" id="UP000000531">
    <property type="component" value="Chromosome"/>
</dbReference>
<dbReference type="GO" id="GO:0008379">
    <property type="term" value="F:thioredoxin peroxidase activity"/>
    <property type="evidence" value="ECO:0007669"/>
    <property type="project" value="UniProtKB-UniRule"/>
</dbReference>
<dbReference type="CDD" id="cd03014">
    <property type="entry name" value="PRX_Atyp2cys"/>
    <property type="match status" value="1"/>
</dbReference>
<dbReference type="Gene3D" id="3.40.30.10">
    <property type="entry name" value="Glutaredoxin"/>
    <property type="match status" value="1"/>
</dbReference>
<dbReference type="HAMAP" id="MF_00269">
    <property type="entry name" value="Tpx"/>
    <property type="match status" value="1"/>
</dbReference>
<dbReference type="InterPro" id="IPR013740">
    <property type="entry name" value="Redoxin"/>
</dbReference>
<dbReference type="InterPro" id="IPR036249">
    <property type="entry name" value="Thioredoxin-like_sf"/>
</dbReference>
<dbReference type="InterPro" id="IPR013766">
    <property type="entry name" value="Thioredoxin_domain"/>
</dbReference>
<dbReference type="InterPro" id="IPR002065">
    <property type="entry name" value="TPX"/>
</dbReference>
<dbReference type="InterPro" id="IPR018219">
    <property type="entry name" value="Tpx_CS"/>
</dbReference>
<dbReference type="InterPro" id="IPR050455">
    <property type="entry name" value="Tpx_Peroxidase_subfamily"/>
</dbReference>
<dbReference type="NCBIfam" id="NF001808">
    <property type="entry name" value="PRK00522.1"/>
    <property type="match status" value="1"/>
</dbReference>
<dbReference type="PANTHER" id="PTHR43110">
    <property type="entry name" value="THIOL PEROXIDASE"/>
    <property type="match status" value="1"/>
</dbReference>
<dbReference type="PANTHER" id="PTHR43110:SF1">
    <property type="entry name" value="THIOL PEROXIDASE"/>
    <property type="match status" value="1"/>
</dbReference>
<dbReference type="Pfam" id="PF08534">
    <property type="entry name" value="Redoxin"/>
    <property type="match status" value="1"/>
</dbReference>
<dbReference type="SUPFAM" id="SSF52833">
    <property type="entry name" value="Thioredoxin-like"/>
    <property type="match status" value="1"/>
</dbReference>
<dbReference type="PROSITE" id="PS51352">
    <property type="entry name" value="THIOREDOXIN_2"/>
    <property type="match status" value="1"/>
</dbReference>
<dbReference type="PROSITE" id="PS01265">
    <property type="entry name" value="TPX"/>
    <property type="match status" value="1"/>
</dbReference>
<keyword id="KW-0049">Antioxidant</keyword>
<keyword id="KW-1015">Disulfide bond</keyword>
<keyword id="KW-0560">Oxidoreductase</keyword>
<keyword id="KW-0575">Peroxidase</keyword>
<keyword id="KW-0676">Redox-active center</keyword>
<keyword id="KW-1185">Reference proteome</keyword>